<proteinExistence type="evidence at protein level"/>
<evidence type="ECO:0000250" key="1"/>
<evidence type="ECO:0000250" key="2">
    <source>
        <dbReference type="UniProtKB" id="P27889"/>
    </source>
</evidence>
<evidence type="ECO:0000250" key="3">
    <source>
        <dbReference type="UniProtKB" id="Q03365"/>
    </source>
</evidence>
<evidence type="ECO:0000255" key="4">
    <source>
        <dbReference type="PROSITE-ProRule" id="PRU00108"/>
    </source>
</evidence>
<evidence type="ECO:0000255" key="5">
    <source>
        <dbReference type="PROSITE-ProRule" id="PRU01285"/>
    </source>
</evidence>
<evidence type="ECO:0000255" key="6">
    <source>
        <dbReference type="PROSITE-ProRule" id="PRU01286"/>
    </source>
</evidence>
<evidence type="ECO:0000256" key="7">
    <source>
        <dbReference type="SAM" id="MobiDB-lite"/>
    </source>
</evidence>
<evidence type="ECO:0000269" key="8">
    <source>
    </source>
</evidence>
<evidence type="ECO:0000269" key="9">
    <source>
    </source>
</evidence>
<evidence type="ECO:0000269" key="10">
    <source>
    </source>
</evidence>
<evidence type="ECO:0000269" key="11">
    <source>
    </source>
</evidence>
<evidence type="ECO:0000269" key="12">
    <source>
    </source>
</evidence>
<evidence type="ECO:0000269" key="13">
    <source>
    </source>
</evidence>
<evidence type="ECO:0000269" key="14">
    <source>
    </source>
</evidence>
<evidence type="ECO:0000269" key="15">
    <source>
    </source>
</evidence>
<evidence type="ECO:0000269" key="16">
    <source>
    </source>
</evidence>
<evidence type="ECO:0000269" key="17">
    <source>
    </source>
</evidence>
<evidence type="ECO:0000269" key="18">
    <source>
    </source>
</evidence>
<evidence type="ECO:0000269" key="19">
    <source>
    </source>
</evidence>
<evidence type="ECO:0000269" key="20">
    <source>
    </source>
</evidence>
<evidence type="ECO:0000269" key="21">
    <source>
    </source>
</evidence>
<evidence type="ECO:0000269" key="22">
    <source>
    </source>
</evidence>
<evidence type="ECO:0000303" key="23">
    <source>
    </source>
</evidence>
<evidence type="ECO:0000303" key="24">
    <source>
    </source>
</evidence>
<evidence type="ECO:0000303" key="25">
    <source ref="4"/>
</evidence>
<evidence type="ECO:0000305" key="26"/>
<evidence type="ECO:0007829" key="27">
    <source>
        <dbReference type="PDB" id="2DA6"/>
    </source>
</evidence>
<evidence type="ECO:0007829" key="28">
    <source>
        <dbReference type="PDB" id="2H8R"/>
    </source>
</evidence>
<protein>
    <recommendedName>
        <fullName>Hepatocyte nuclear factor 1-beta</fullName>
        <shortName>HNF-1-beta</shortName>
        <shortName>HNF-1B</shortName>
    </recommendedName>
    <alternativeName>
        <fullName>Homeoprotein LFB3</fullName>
    </alternativeName>
    <alternativeName>
        <fullName>Transcription factor 2</fullName>
        <shortName>TCF-2</shortName>
    </alternativeName>
    <alternativeName>
        <fullName>Variant hepatic nuclear factor 1</fullName>
        <shortName>vHNF1</shortName>
    </alternativeName>
</protein>
<reference key="1">
    <citation type="journal article" date="1991" name="Nucleic Acids Res.">
        <title>Two members of an HNF1 homeoprotein family are expressed in human liver.</title>
        <authorList>
            <person name="Bach I."/>
            <person name="Mattei M.-G."/>
            <person name="Cereghini S."/>
            <person name="Yaniv M."/>
        </authorList>
    </citation>
    <scope>NUCLEOTIDE SEQUENCE [MRNA] (ISOFORM A)</scope>
    <source>
        <tissue>Liver</tissue>
    </source>
</reference>
<reference key="2">
    <citation type="journal article" date="1993" name="EMBO J.">
        <title>More potent transcriptional activators or a transdominant inhibitor of the HNF1 homeoprotein family are generated by alternative RNA processing.</title>
        <authorList>
            <person name="Bach I."/>
            <person name="Yaniv M."/>
        </authorList>
    </citation>
    <scope>NUCLEOTIDE SEQUENCE [MRNA] (ISOFORMS A; B AND C)</scope>
    <scope>FUNCTION</scope>
    <source>
        <tissue>Liver</tissue>
    </source>
</reference>
<reference key="3">
    <citation type="journal article" date="1997" name="Nat. Genet.">
        <title>Mutation in hepatocyte nuclear factor-1 beta gene (TCF2) associated with MODY.</title>
        <authorList>
            <person name="Horikawa Y."/>
            <person name="Iwasaki N."/>
            <person name="Hara M."/>
            <person name="Furuta H."/>
            <person name="Hinokio Y."/>
            <person name="Cockburn B.N."/>
            <person name="Lindner T."/>
            <person name="Yamagata K."/>
            <person name="Ogata M."/>
            <person name="Tomonaga O."/>
            <person name="Kuroki H."/>
            <person name="Kasahara T."/>
            <person name="Iwamoto Y."/>
            <person name="Bell G.I."/>
        </authorList>
    </citation>
    <scope>NUCLEOTIDE SEQUENCE [GENOMIC DNA]</scope>
</reference>
<reference key="4">
    <citation type="submission" date="2010-04" db="EMBL/GenBank/DDBJ databases">
        <title>Homo sapiens HNF1 beta A mRNA splicing variant 4.</title>
        <authorList>
            <person name="Yang C.-W."/>
            <person name="Tsai D.-Y."/>
        </authorList>
    </citation>
    <scope>NUCLEOTIDE SEQUENCE [MRNA] (ISOFORM 4)</scope>
</reference>
<reference key="5">
    <citation type="journal article" date="2004" name="Nat. Genet.">
        <title>Complete sequencing and characterization of 21,243 full-length human cDNAs.</title>
        <authorList>
            <person name="Ota T."/>
            <person name="Suzuki Y."/>
            <person name="Nishikawa T."/>
            <person name="Otsuki T."/>
            <person name="Sugiyama T."/>
            <person name="Irie R."/>
            <person name="Wakamatsu A."/>
            <person name="Hayashi K."/>
            <person name="Sato H."/>
            <person name="Nagai K."/>
            <person name="Kimura K."/>
            <person name="Makita H."/>
            <person name="Sekine M."/>
            <person name="Obayashi M."/>
            <person name="Nishi T."/>
            <person name="Shibahara T."/>
            <person name="Tanaka T."/>
            <person name="Ishii S."/>
            <person name="Yamamoto J."/>
            <person name="Saito K."/>
            <person name="Kawai Y."/>
            <person name="Isono Y."/>
            <person name="Nakamura Y."/>
            <person name="Nagahari K."/>
            <person name="Murakami K."/>
            <person name="Yasuda T."/>
            <person name="Iwayanagi T."/>
            <person name="Wagatsuma M."/>
            <person name="Shiratori A."/>
            <person name="Sudo H."/>
            <person name="Hosoiri T."/>
            <person name="Kaku Y."/>
            <person name="Kodaira H."/>
            <person name="Kondo H."/>
            <person name="Sugawara M."/>
            <person name="Takahashi M."/>
            <person name="Kanda K."/>
            <person name="Yokoi T."/>
            <person name="Furuya T."/>
            <person name="Kikkawa E."/>
            <person name="Omura Y."/>
            <person name="Abe K."/>
            <person name="Kamihara K."/>
            <person name="Katsuta N."/>
            <person name="Sato K."/>
            <person name="Tanikawa M."/>
            <person name="Yamazaki M."/>
            <person name="Ninomiya K."/>
            <person name="Ishibashi T."/>
            <person name="Yamashita H."/>
            <person name="Murakawa K."/>
            <person name="Fujimori K."/>
            <person name="Tanai H."/>
            <person name="Kimata M."/>
            <person name="Watanabe M."/>
            <person name="Hiraoka S."/>
            <person name="Chiba Y."/>
            <person name="Ishida S."/>
            <person name="Ono Y."/>
            <person name="Takiguchi S."/>
            <person name="Watanabe S."/>
            <person name="Yosida M."/>
            <person name="Hotuta T."/>
            <person name="Kusano J."/>
            <person name="Kanehori K."/>
            <person name="Takahashi-Fujii A."/>
            <person name="Hara H."/>
            <person name="Tanase T.-O."/>
            <person name="Nomura Y."/>
            <person name="Togiya S."/>
            <person name="Komai F."/>
            <person name="Hara R."/>
            <person name="Takeuchi K."/>
            <person name="Arita M."/>
            <person name="Imose N."/>
            <person name="Musashino K."/>
            <person name="Yuuki H."/>
            <person name="Oshima A."/>
            <person name="Sasaki N."/>
            <person name="Aotsuka S."/>
            <person name="Yoshikawa Y."/>
            <person name="Matsunawa H."/>
            <person name="Ichihara T."/>
            <person name="Shiohata N."/>
            <person name="Sano S."/>
            <person name="Moriya S."/>
            <person name="Momiyama H."/>
            <person name="Satoh N."/>
            <person name="Takami S."/>
            <person name="Terashima Y."/>
            <person name="Suzuki O."/>
            <person name="Nakagawa S."/>
            <person name="Senoh A."/>
            <person name="Mizoguchi H."/>
            <person name="Goto Y."/>
            <person name="Shimizu F."/>
            <person name="Wakebe H."/>
            <person name="Hishigaki H."/>
            <person name="Watanabe T."/>
            <person name="Sugiyama A."/>
            <person name="Takemoto M."/>
            <person name="Kawakami B."/>
            <person name="Yamazaki M."/>
            <person name="Watanabe K."/>
            <person name="Kumagai A."/>
            <person name="Itakura S."/>
            <person name="Fukuzumi Y."/>
            <person name="Fujimori Y."/>
            <person name="Komiyama M."/>
            <person name="Tashiro H."/>
            <person name="Tanigami A."/>
            <person name="Fujiwara T."/>
            <person name="Ono T."/>
            <person name="Yamada K."/>
            <person name="Fujii Y."/>
            <person name="Ozaki K."/>
            <person name="Hirao M."/>
            <person name="Ohmori Y."/>
            <person name="Kawabata A."/>
            <person name="Hikiji T."/>
            <person name="Kobatake N."/>
            <person name="Inagaki H."/>
            <person name="Ikema Y."/>
            <person name="Okamoto S."/>
            <person name="Okitani R."/>
            <person name="Kawakami T."/>
            <person name="Noguchi S."/>
            <person name="Itoh T."/>
            <person name="Shigeta K."/>
            <person name="Senba T."/>
            <person name="Matsumura K."/>
            <person name="Nakajima Y."/>
            <person name="Mizuno T."/>
            <person name="Morinaga M."/>
            <person name="Sasaki M."/>
            <person name="Togashi T."/>
            <person name="Oyama M."/>
            <person name="Hata H."/>
            <person name="Watanabe M."/>
            <person name="Komatsu T."/>
            <person name="Mizushima-Sugano J."/>
            <person name="Satoh T."/>
            <person name="Shirai Y."/>
            <person name="Takahashi Y."/>
            <person name="Nakagawa K."/>
            <person name="Okumura K."/>
            <person name="Nagase T."/>
            <person name="Nomura N."/>
            <person name="Kikuchi H."/>
            <person name="Masuho Y."/>
            <person name="Yamashita R."/>
            <person name="Nakai K."/>
            <person name="Yada T."/>
            <person name="Nakamura Y."/>
            <person name="Ohara O."/>
            <person name="Isogai T."/>
            <person name="Sugano S."/>
        </authorList>
    </citation>
    <scope>NUCLEOTIDE SEQUENCE [LARGE SCALE MRNA] (ISOFORM B)</scope>
    <source>
        <tissue>Colon</tissue>
    </source>
</reference>
<reference key="6">
    <citation type="journal article" date="2006" name="Nature">
        <title>DNA sequence of human chromosome 17 and analysis of rearrangement in the human lineage.</title>
        <authorList>
            <person name="Zody M.C."/>
            <person name="Garber M."/>
            <person name="Adams D.J."/>
            <person name="Sharpe T."/>
            <person name="Harrow J."/>
            <person name="Lupski J.R."/>
            <person name="Nicholson C."/>
            <person name="Searle S.M."/>
            <person name="Wilming L."/>
            <person name="Young S.K."/>
            <person name="Abouelleil A."/>
            <person name="Allen N.R."/>
            <person name="Bi W."/>
            <person name="Bloom T."/>
            <person name="Borowsky M.L."/>
            <person name="Bugalter B.E."/>
            <person name="Butler J."/>
            <person name="Chang J.L."/>
            <person name="Chen C.-K."/>
            <person name="Cook A."/>
            <person name="Corum B."/>
            <person name="Cuomo C.A."/>
            <person name="de Jong P.J."/>
            <person name="DeCaprio D."/>
            <person name="Dewar K."/>
            <person name="FitzGerald M."/>
            <person name="Gilbert J."/>
            <person name="Gibson R."/>
            <person name="Gnerre S."/>
            <person name="Goldstein S."/>
            <person name="Grafham D.V."/>
            <person name="Grocock R."/>
            <person name="Hafez N."/>
            <person name="Hagopian D.S."/>
            <person name="Hart E."/>
            <person name="Norman C.H."/>
            <person name="Humphray S."/>
            <person name="Jaffe D.B."/>
            <person name="Jones M."/>
            <person name="Kamal M."/>
            <person name="Khodiyar V.K."/>
            <person name="LaButti K."/>
            <person name="Laird G."/>
            <person name="Lehoczky J."/>
            <person name="Liu X."/>
            <person name="Lokyitsang T."/>
            <person name="Loveland J."/>
            <person name="Lui A."/>
            <person name="Macdonald P."/>
            <person name="Major J.E."/>
            <person name="Matthews L."/>
            <person name="Mauceli E."/>
            <person name="McCarroll S.A."/>
            <person name="Mihalev A.H."/>
            <person name="Mudge J."/>
            <person name="Nguyen C."/>
            <person name="Nicol R."/>
            <person name="O'Leary S.B."/>
            <person name="Osoegawa K."/>
            <person name="Schwartz D.C."/>
            <person name="Shaw-Smith C."/>
            <person name="Stankiewicz P."/>
            <person name="Steward C."/>
            <person name="Swarbreck D."/>
            <person name="Venkataraman V."/>
            <person name="Whittaker C.A."/>
            <person name="Yang X."/>
            <person name="Zimmer A.R."/>
            <person name="Bradley A."/>
            <person name="Hubbard T."/>
            <person name="Birren B.W."/>
            <person name="Rogers J."/>
            <person name="Lander E.S."/>
            <person name="Nusbaum C."/>
        </authorList>
    </citation>
    <scope>NUCLEOTIDE SEQUENCE [LARGE SCALE GENOMIC DNA]</scope>
</reference>
<reference key="7">
    <citation type="journal article" date="2004" name="Genome Res.">
        <title>The status, quality, and expansion of the NIH full-length cDNA project: the Mammalian Gene Collection (MGC).</title>
        <authorList>
            <consortium name="The MGC Project Team"/>
        </authorList>
    </citation>
    <scope>NUCLEOTIDE SEQUENCE [LARGE SCALE MRNA]</scope>
    <source>
        <tissue>Liver</tissue>
    </source>
</reference>
<reference key="8">
    <citation type="journal article" date="1999" name="Hum. Mol. Genet.">
        <title>A novel syndrome of diabetes mellitus, renal dysfunction and genital malformation associated with a partial deletion of the pseudo-POU domain of hepatocyte nuclear factor-1beta.</title>
        <authorList>
            <person name="Lindner T.H."/>
            <person name="Njoelstad P.R."/>
            <person name="Horikawa Y."/>
            <person name="Bostad L."/>
            <person name="Bell G.I."/>
            <person name="Soevik O."/>
        </authorList>
    </citation>
    <scope>INVOLVEMENT IN RCAD</scope>
</reference>
<reference key="9">
    <citation type="submission" date="2006-12" db="PDB data bank">
        <title>Solution structure of the homeobox domain of hepatocyte nuclear factor 1-beta (HNF-1beta).</title>
        <authorList>
            <consortium name="RIKEN structural genomics initiative (RSGI)"/>
        </authorList>
    </citation>
    <scope>STRUCTURE BY NMR OF 233-321</scope>
</reference>
<reference key="10">
    <citation type="journal article" date="2007" name="Biochemistry">
        <title>Structural basis of disease-causing mutations in hepatocyte nuclear factor 1beta.</title>
        <authorList>
            <person name="Lu P."/>
            <person name="Rha G.B."/>
            <person name="Chi Y.I."/>
        </authorList>
    </citation>
    <scope>X-RAY CRYSTALLOGRAPHY (3.2 ANGSTROMS) OF 91-310 IN COMPLEX WITH DNA</scope>
    <scope>FUNCTION</scope>
</reference>
<reference key="11">
    <citation type="journal article" date="2000" name="Diabetologia">
        <title>Hepatocyte nuclear factor-1 beta (MODY5) gene mutations in Scandinavian families with early-onset diabetes or kidney disease or both.</title>
        <authorList>
            <person name="Weng J.P."/>
            <person name="Lehto M."/>
            <person name="Forsblom C."/>
            <person name="Huang X."/>
            <person name="Li H."/>
            <person name="Groop L.C."/>
        </authorList>
    </citation>
    <scope>VARIANT RCAD THR-241</scope>
    <scope>VARIANT SER-492</scope>
</reference>
<reference key="12">
    <citation type="journal article" date="2002" name="Diabetologia">
        <title>Identification of a gain-of-function mutation in the HNF-1beta gene in a Japanese family with MODY.</title>
        <authorList>
            <person name="Yoshiuchi I."/>
            <person name="Yamagata K."/>
            <person name="Zhu Q."/>
            <person name="Tamada I."/>
            <person name="Takahashi Y."/>
            <person name="Onigata K."/>
            <person name="Takeda J."/>
            <person name="Miyagawa J."/>
            <person name="Matsuzawa Y."/>
        </authorList>
    </citation>
    <scope>VARIANT RCAD PHE-36</scope>
    <scope>CHARACTERIZATION OF VARIANT RCAD PHE-36</scope>
</reference>
<reference key="13">
    <citation type="journal article" date="2002" name="Kidney Int.">
        <title>Solitary functioning kidney and diverse genital tract malformations associated with hepatocyte nuclear factor-1beta mutations.</title>
        <authorList>
            <person name="Bingham C."/>
            <person name="Ellard S."/>
            <person name="Cole T.R.P."/>
            <person name="Jones K.E."/>
            <person name="Allen L.I.S."/>
            <person name="Goodship J.A."/>
            <person name="Goodship T.H.J."/>
            <person name="Bakalinova-Pugh D."/>
            <person name="Russell G.I."/>
            <person name="Woolf A.S."/>
            <person name="Nicholls A.J."/>
            <person name="Hattersley A.T."/>
        </authorList>
    </citation>
    <scope>VARIANT RCAD PRO-151</scope>
</reference>
<reference key="14">
    <citation type="journal article" date="2002" name="J. Clin. Endocrinol. Metab.">
        <title>Nonsense and missense mutations in the human hepatocyte nuclear factor-1 beta gene (TCF2) and their relation to type 2 diabetes in Japanese.</title>
        <authorList>
            <person name="Furuta H."/>
            <person name="Furuta M."/>
            <person name="Sanke T."/>
            <person name="Ekawa K."/>
            <person name="Hanabusa T."/>
            <person name="Nishi M."/>
            <person name="Sasaki H."/>
            <person name="Nanjo K."/>
        </authorList>
    </citation>
    <scope>VARIANT T2D ARG-465</scope>
</reference>
<reference key="15">
    <citation type="journal article" date="2003" name="J. Diabetes Complications">
        <title>Genetic variants of hepatocyte nuclear factor-1beta in Chinese young-onset diabetic patients with nephropathy.</title>
        <authorList>
            <person name="So W.Y."/>
            <person name="Ng M.C.Y."/>
            <person name="Horikawa Y."/>
            <person name="Njoelstad P.R."/>
            <person name="Li J.K.Y."/>
            <person name="Ma R.C.W."/>
            <person name="Bell G.I."/>
            <person name="Chan J.C.N."/>
        </authorList>
    </citation>
    <scope>VARIANT RCAD ASP-260</scope>
    <scope>CHARACTERIZATION OF VARIANT RCAD ASP-260</scope>
</reference>
<reference key="16">
    <citation type="journal article" date="2004" name="Ann. Intern. Med.">
        <title>Clinical spectrum associated with hepatocyte nuclear factor-1beta mutations.</title>
        <authorList>
            <person name="Bellanne-Chantelot C."/>
            <person name="Chauveau D."/>
            <person name="Gautier J.-F."/>
            <person name="Dubois-Laforgue D."/>
            <person name="Clauin S."/>
            <person name="Beaufils S."/>
            <person name="Wilhelm J.-M."/>
            <person name="Boitard C."/>
            <person name="Noeel L.-H."/>
            <person name="Velho G."/>
            <person name="Timsit J."/>
        </authorList>
    </citation>
    <scope>VARIANTS RCAD PRO-112; GLU-136; GLN-164; HIS-165 AND HIS-295</scope>
</reference>
<reference key="17">
    <citation type="journal article" date="2004" name="J. Clin. Endocrinol. Metab.">
        <title>Promoter-specific repression of hepatocyte nuclear factor (HNF)-1beta and HNF-1alpha transcriptional activity by an HNF-1beta missense mutant associated with type 5 maturity-onset diabetes of the young with hepatic and biliary manifestations.</title>
        <authorList>
            <person name="Kitanaka S."/>
            <person name="Miki Y."/>
            <person name="Hayashi Y."/>
            <person name="Igarashi T."/>
        </authorList>
    </citation>
    <scope>VARIANT RCAD ASN-153</scope>
    <scope>CHARACTERIZATION OF VARIANT RCAD ASN-153</scope>
</reference>
<reference key="18">
    <citation type="journal article" date="2004" name="J. Clin. Endocrinol. Metab.">
        <title>Neonatal diabetes mellitus and neonatal polycystic, dysplastic kidneys: phenotypically discordant recurrence of a mutation in the hepatocyte nuclear factor-1beta gene due to germline mosaicism.</title>
        <authorList>
            <person name="Yorifuji T."/>
            <person name="Kurokawa K."/>
            <person name="Mamada M."/>
            <person name="Imai T."/>
            <person name="Kawai M."/>
            <person name="Nishi Y."/>
            <person name="Shishido S."/>
            <person name="Hasegawa Y."/>
            <person name="Nakahata T."/>
        </authorList>
    </citation>
    <scope>VARIANT RCAD TRP-148</scope>
</reference>
<reference key="19">
    <citation type="journal article" date="2005" name="Diabetes">
        <title>Large genomic rearrangements in the hepatocyte nuclear factor-1beta (TCF2) gene are the most frequent cause of maturity-onset diabetes of the young type 5.</title>
        <authorList>
            <person name="Bellanne-Chantelot C."/>
            <person name="Clauin S."/>
            <person name="Chauveau D."/>
            <person name="Collin P."/>
            <person name="Daumont M."/>
            <person name="Douillard C."/>
            <person name="Dubois-Laforgue D."/>
            <person name="Dusselier L."/>
            <person name="Gautier J.-F."/>
            <person name="Jadoul M."/>
            <person name="Laloi-Michelin M."/>
            <person name="Jacquesson L."/>
            <person name="Larger E."/>
            <person name="Louis J."/>
            <person name="Nicolino M."/>
            <person name="Subra J.-F."/>
            <person name="Wilhem J.-M."/>
            <person name="Young J."/>
            <person name="Velho G."/>
            <person name="Timsit J."/>
        </authorList>
    </citation>
    <scope>VARIANTS RCAD CYS-76; PRO-112; GLU-136; GLN-164; HIS-165; GLN-235; GLY-276; ASP-285; CYS-295; HIS-295 AND SER-370</scope>
</reference>
<reference key="20">
    <citation type="journal article" date="2006" name="J. Med. Genet.">
        <title>Mutations in hepatocyte nuclear factor-1beta and their related phenotypes.</title>
        <authorList>
            <person name="Edghill E.L."/>
            <person name="Bingham C."/>
            <person name="Ellard S."/>
            <person name="Hattersley A.T."/>
        </authorList>
    </citation>
    <scope>VARIANTS RCAD GLY-61; GLY-110; LEU-148; GLU-156; GLN-276 AND PRO-295</scope>
</reference>
<reference key="21">
    <citation type="journal article" date="2008" name="Nat. Genet.">
        <title>Multiple newly identified loci associated with prostate cancer susceptibility.</title>
        <authorList>
            <consortium name="The UK genetic prostate cancer study collaborators"/>
            <consortium name="British association of urological surgeons section of oncology"/>
            <consortium name="The UK protecT study collaborators"/>
            <person name="Eeles R.A."/>
            <person name="Kote-Jarai Z."/>
            <person name="Giles G.G."/>
            <person name="Al Olama A.A."/>
            <person name="Guy M."/>
            <person name="Jugurnauth S.K."/>
            <person name="Mulholland S."/>
            <person name="Leongamornlert D.A."/>
            <person name="Edwards S.M."/>
            <person name="Morrison J."/>
            <person name="Field H.I."/>
            <person name="Southey M.C."/>
            <person name="Severi G."/>
            <person name="Donovan J.L."/>
            <person name="Hamdy F.C."/>
            <person name="Dearnaley D.P."/>
            <person name="Muir K.R."/>
            <person name="Smith C."/>
            <person name="Bagnato M."/>
            <person name="Ardern-Jones A.T."/>
            <person name="Hall A.L."/>
            <person name="O'Brien L.T."/>
            <person name="Gehr-Swain B.N."/>
            <person name="Wilkinson R.A."/>
            <person name="Cox A."/>
            <person name="Lewis S."/>
            <person name="Brown P.M."/>
            <person name="Jhavar S.G."/>
            <person name="Tymrakiewicz M."/>
            <person name="Lophatananon A."/>
            <person name="Bryant S.L."/>
            <person name="Horwich A."/>
            <person name="Huddart R.A."/>
            <person name="Khoo V.S."/>
            <person name="Parker C.C."/>
            <person name="Woodhouse C.J."/>
            <person name="Thompson A."/>
            <person name="Christmas T."/>
            <person name="Ogden C."/>
            <person name="Fisher C."/>
            <person name="Jamieson C."/>
            <person name="Cooper C.S."/>
            <person name="English D.R."/>
            <person name="Hopper J.L."/>
            <person name="Neal D.E."/>
            <person name="Easton D.F."/>
        </authorList>
    </citation>
    <scope>INVOLVEMENT IN SUSCEPTIBILITY TO HEREDITARY PROSTATE CANCER</scope>
</reference>
<reference key="22">
    <citation type="journal article" date="2014" name="J. Am. Soc. Nephrol.">
        <title>Mutations in PCBD1 cause hypomagnesemia and renal magnesium wasting.</title>
        <authorList>
            <person name="Ferre S."/>
            <person name="de Baaij J.H."/>
            <person name="Ferreira P."/>
            <person name="Germann R."/>
            <person name="de Klerk J.B."/>
            <person name="Lavrijsen M."/>
            <person name="van Zeeland F."/>
            <person name="Venselaar H."/>
            <person name="Kluijtmans L.A."/>
            <person name="Hoenderop J.G."/>
            <person name="Bindels R.J."/>
        </authorList>
    </citation>
    <scope>CHARACTERIZATION OF VARIANTS RCAD GLU-156 AND GLY-276</scope>
    <scope>FUNCTION</scope>
    <scope>INTERACTION WITH PCBD1</scope>
    <scope>MUTAGENESIS OF 1-MET--LEU-30 AND GLN-253</scope>
</reference>
<keyword id="KW-0002">3D-structure</keyword>
<keyword id="KW-0010">Activator</keyword>
<keyword id="KW-0025">Alternative splicing</keyword>
<keyword id="KW-0219">Diabetes mellitus</keyword>
<keyword id="KW-0225">Disease variant</keyword>
<keyword id="KW-0238">DNA-binding</keyword>
<keyword id="KW-0371">Homeobox</keyword>
<keyword id="KW-0539">Nucleus</keyword>
<keyword id="KW-0597">Phosphoprotein</keyword>
<keyword id="KW-1267">Proteomics identification</keyword>
<keyword id="KW-1185">Reference proteome</keyword>
<keyword id="KW-0804">Transcription</keyword>
<keyword id="KW-0805">Transcription regulation</keyword>
<organism>
    <name type="scientific">Homo sapiens</name>
    <name type="common">Human</name>
    <dbReference type="NCBI Taxonomy" id="9606"/>
    <lineage>
        <taxon>Eukaryota</taxon>
        <taxon>Metazoa</taxon>
        <taxon>Chordata</taxon>
        <taxon>Craniata</taxon>
        <taxon>Vertebrata</taxon>
        <taxon>Euteleostomi</taxon>
        <taxon>Mammalia</taxon>
        <taxon>Eutheria</taxon>
        <taxon>Euarchontoglires</taxon>
        <taxon>Primates</taxon>
        <taxon>Haplorrhini</taxon>
        <taxon>Catarrhini</taxon>
        <taxon>Hominidae</taxon>
        <taxon>Homo</taxon>
    </lineage>
</organism>
<accession>P35680</accession>
<accession>B4DKM3</accession>
<accession>E0YMJ9</accession>
<feature type="chain" id="PRO_0000049121" description="Hepatocyte nuclear factor 1-beta">
    <location>
        <begin position="1"/>
        <end position="557"/>
    </location>
</feature>
<feature type="domain" description="HNF-p1" evidence="6">
    <location>
        <begin position="1"/>
        <end position="32"/>
    </location>
</feature>
<feature type="domain" description="POU-specific atypical" evidence="5">
    <location>
        <begin position="93"/>
        <end position="188"/>
    </location>
</feature>
<feature type="DNA-binding region" description="Homeobox; HNF1-type" evidence="4">
    <location>
        <begin position="231"/>
        <end position="311"/>
    </location>
</feature>
<feature type="region of interest" description="Dimerization" evidence="1">
    <location>
        <begin position="1"/>
        <end position="31"/>
    </location>
</feature>
<feature type="region of interest" description="Disordered" evidence="7">
    <location>
        <begin position="64"/>
        <end position="85"/>
    </location>
</feature>
<feature type="region of interest" description="Disordered" evidence="7">
    <location>
        <begin position="324"/>
        <end position="352"/>
    </location>
</feature>
<feature type="compositionally biased region" description="Low complexity" evidence="7">
    <location>
        <begin position="328"/>
        <end position="344"/>
    </location>
</feature>
<feature type="modified residue" description="Phosphoserine" evidence="2">
    <location>
        <position position="49"/>
    </location>
</feature>
<feature type="modified residue" description="Phosphoserine" evidence="2">
    <location>
        <position position="52"/>
    </location>
</feature>
<feature type="modified residue" description="Phosphoserine" evidence="2">
    <location>
        <position position="75"/>
    </location>
</feature>
<feature type="modified residue" description="Phosphoserine" evidence="2">
    <location>
        <position position="80"/>
    </location>
</feature>
<feature type="splice variant" id="VSP_053327" description="In isoform 4." evidence="25">
    <location>
        <begin position="96"/>
        <end position="125"/>
    </location>
</feature>
<feature type="splice variant" id="VSP_002254" description="In isoform B and isoform 4." evidence="23 24 25">
    <location>
        <begin position="183"/>
        <end position="208"/>
    </location>
</feature>
<feature type="splice variant" id="VSP_002255" description="In isoform C." evidence="24">
    <original>VRYSQQGNNEITSSSTISHHGNSAMVTSQSVLQQVSPASLDPGHNLLSPDG</original>
    <variation>KQRLGLTASATQPSWFLPRILSGLRVFRGANAFEMILGPLSHCQNILPWK</variation>
    <location>
        <begin position="350"/>
        <end position="400"/>
    </location>
</feature>
<feature type="splice variant" id="VSP_002256" description="In isoform C." evidence="24">
    <location>
        <begin position="401"/>
        <end position="557"/>
    </location>
</feature>
<feature type="splice variant" id="VSP_053328" description="In isoform 4." evidence="25">
    <original>SLNTSQAQSVPVINSVAGSLAALQPVQFSQQLHSPHQ</original>
    <variation>MSSTSLVMPTHHLLRAQQQGPCFPHHHPLGSCHGKAQ</variation>
    <location>
        <begin position="447"/>
        <end position="483"/>
    </location>
</feature>
<feature type="splice variant" id="VSP_053329" description="In isoform 4." evidence="25">
    <location>
        <begin position="484"/>
        <end position="557"/>
    </location>
</feature>
<feature type="sequence variant" id="VAR_046012" description="In RCAD; gain-of-function mutation; dbSNP:rs544890850." evidence="10">
    <original>S</original>
    <variation>F</variation>
    <location>
        <position position="36"/>
    </location>
</feature>
<feature type="sequence variant" id="VAR_046013" description="In RCAD; dbSNP:rs147816724." evidence="17">
    <original>V</original>
    <variation>G</variation>
    <location>
        <position position="61"/>
    </location>
</feature>
<feature type="sequence variant" id="VAR_046014" description="In RCAD; uncertain significance; dbSNP:rs144425830." evidence="18">
    <original>G</original>
    <variation>C</variation>
    <location>
        <position position="76"/>
    </location>
</feature>
<feature type="sequence variant" id="VAR_046015" description="In RCAD; dbSNP:rs894213416." evidence="17">
    <original>V</original>
    <variation>G</variation>
    <location>
        <position position="110"/>
    </location>
</feature>
<feature type="sequence variant" id="VAR_046016" description="In RCAD." evidence="15 18">
    <original>R</original>
    <variation>P</variation>
    <location>
        <position position="112"/>
    </location>
</feature>
<feature type="sequence variant" id="VAR_046017" description="In RCAD." evidence="15 18">
    <original>Q</original>
    <variation>E</variation>
    <location>
        <position position="136"/>
    </location>
</feature>
<feature type="sequence variant" id="VAR_046018" description="In RCAD." evidence="17">
    <original>S</original>
    <variation>L</variation>
    <location>
        <position position="148"/>
    </location>
</feature>
<feature type="sequence variant" id="VAR_046019" description="In RCAD; dbSNP:rs121918674." evidence="16">
    <original>S</original>
    <variation>W</variation>
    <location>
        <position position="148"/>
    </location>
</feature>
<feature type="sequence variant" id="VAR_046020" description="In RCAD." evidence="11">
    <original>S</original>
    <variation>P</variation>
    <location>
        <position position="151"/>
    </location>
</feature>
<feature type="sequence variant" id="VAR_046021" description="In RCAD; has diminished transcriptional activity by loss of DNA binding activity." evidence="14">
    <original>H</original>
    <variation>N</variation>
    <location>
        <position position="153"/>
    </location>
</feature>
<feature type="sequence variant" id="VAR_046022" description="In RCAD; no impact on interaction with PCBD1; reduced coactivation by PCBD1." evidence="17 21">
    <original>K</original>
    <variation>E</variation>
    <location>
        <position position="156"/>
    </location>
</feature>
<feature type="sequence variant" id="VAR_046023" description="In RCAD." evidence="15 18">
    <original>K</original>
    <variation>Q</variation>
    <location>
        <position position="164"/>
    </location>
</feature>
<feature type="sequence variant" id="VAR_046024" description="In RCAD; dbSNP:rs121918675." evidence="15 18">
    <original>R</original>
    <variation>H</variation>
    <location>
        <position position="165"/>
    </location>
</feature>
<feature type="sequence variant" id="VAR_046025" description="In RCAD." evidence="18">
    <original>R</original>
    <variation>Q</variation>
    <location>
        <position position="235"/>
    </location>
</feature>
<feature type="sequence variant" id="VAR_046026" description="In RCAD; dbSNP:rs761415487." evidence="9">
    <original>A</original>
    <variation>T</variation>
    <location>
        <position position="241"/>
    </location>
</feature>
<feature type="sequence variant" id="VAR_046027" description="In RCAD; insignificant differences in transactivation ability between wild-type and mutated HNF1B; dbSNP:rs536638039." evidence="13">
    <original>E</original>
    <variation>D</variation>
    <location>
        <position position="260"/>
    </location>
</feature>
<feature type="sequence variant" id="VAR_046028" description="In RCAD; no impact on interaction with PCBD1; reduced coactivation by PCBD1." evidence="18 21">
    <original>R</original>
    <variation>G</variation>
    <location>
        <position position="276"/>
    </location>
</feature>
<feature type="sequence variant" id="VAR_046029" description="In RCAD." evidence="17">
    <original>R</original>
    <variation>Q</variation>
    <location>
        <position position="276"/>
    </location>
</feature>
<feature type="sequence variant" id="VAR_046030" description="In RCAD." evidence="18">
    <original>G</original>
    <variation>D</variation>
    <location>
        <position position="285"/>
    </location>
</feature>
<feature type="sequence variant" id="VAR_046031" description="In RCAD." evidence="18">
    <original>R</original>
    <variation>C</variation>
    <location>
        <position position="295"/>
    </location>
</feature>
<feature type="sequence variant" id="VAR_046032" description="In RCAD; dbSNP:rs886043813." evidence="15 18">
    <original>R</original>
    <variation>H</variation>
    <location>
        <position position="295"/>
    </location>
</feature>
<feature type="sequence variant" id="VAR_046033" description="In RCAD." evidence="17">
    <original>R</original>
    <variation>P</variation>
    <location>
        <position position="295"/>
    </location>
</feature>
<feature type="sequence variant" id="VAR_046034" description="In RCAD; dbSNP:rs113042313." evidence="18">
    <original>G</original>
    <variation>S</variation>
    <location>
        <position position="370"/>
    </location>
</feature>
<feature type="sequence variant" id="VAR_017665" description="In T2D; 22% reduction in activity; dbSNP:rs121918673." evidence="12">
    <original>S</original>
    <variation>R</variation>
    <location>
        <position position="465"/>
    </location>
</feature>
<feature type="sequence variant" id="VAR_012058" description="Found in patients with early-onset diabetes; uncertain significance; dbSNP:rs187556368." evidence="9">
    <original>G</original>
    <variation>S</variation>
    <location>
        <position position="492"/>
    </location>
</feature>
<feature type="mutagenesis site" description="Loss of interaction with PCBD1. Loss of PCBD1 recruitment to the nucleus." evidence="21">
    <location>
        <begin position="1"/>
        <end position="32"/>
    </location>
</feature>
<feature type="mutagenesis site" description="No impact on interaction with PCBD1. Reduced PCBD1 recruitment to the nucleus. Reduced coactivation by PCBD1." evidence="21">
    <original>Q</original>
    <variation>P</variation>
    <location>
        <position position="253"/>
    </location>
</feature>
<feature type="helix" evidence="28">
    <location>
        <begin position="91"/>
        <end position="98"/>
    </location>
</feature>
<feature type="helix" evidence="28">
    <location>
        <begin position="101"/>
        <end position="113"/>
    </location>
</feature>
<feature type="helix" evidence="28">
    <location>
        <begin position="118"/>
        <end position="132"/>
    </location>
</feature>
<feature type="helix" evidence="28">
    <location>
        <begin position="136"/>
        <end position="143"/>
    </location>
</feature>
<feature type="helix" evidence="28">
    <location>
        <begin position="147"/>
        <end position="154"/>
    </location>
</feature>
<feature type="helix" evidence="28">
    <location>
        <begin position="162"/>
        <end position="181"/>
    </location>
</feature>
<feature type="turn" evidence="28">
    <location>
        <begin position="182"/>
        <end position="185"/>
    </location>
</feature>
<feature type="helix" evidence="28">
    <location>
        <begin position="240"/>
        <end position="252"/>
    </location>
</feature>
<feature type="helix" evidence="28">
    <location>
        <begin position="258"/>
        <end position="275"/>
    </location>
</feature>
<feature type="helix" evidence="28">
    <location>
        <begin position="283"/>
        <end position="286"/>
    </location>
</feature>
<feature type="helix" evidence="28">
    <location>
        <begin position="293"/>
        <end position="304"/>
    </location>
</feature>
<feature type="strand" evidence="27">
    <location>
        <begin position="316"/>
        <end position="321"/>
    </location>
</feature>
<gene>
    <name type="primary">HNF1B</name>
    <name type="synonym">TCF2</name>
</gene>
<comment type="function">
    <text evidence="3 19 21 22">Transcription factor that binds to the inverted palindrome 5'-GTTAATNATTAAC-3' (PubMed:17924661, PubMed:7900999). Binds to the FPC element in the cAMP regulatory unit of the PLAU gene (By similarity). Transcriptional activity is increased by coactivator PCBD1 (PubMed:24204001).</text>
</comment>
<comment type="subunit">
    <text evidence="19 21">Binds DNA as a dimer. Can form homodimer or heterodimer with HNF1-alpha. Interacts (via HNF-p1 domain) with PCBD1; the interaction increases its transactivation activity (PubMed:24204001).</text>
</comment>
<comment type="interaction">
    <interactant intactId="EBI-2798841">
        <id>P35680</id>
    </interactant>
    <interactant intactId="EBI-953896">
        <id>Q9NP55</id>
        <label>BPIFA1</label>
    </interactant>
    <organismsDiffer>false</organismsDiffer>
    <experiments>3</experiments>
</comment>
<comment type="interaction">
    <interactant intactId="EBI-2798841">
        <id>P35680</id>
    </interactant>
    <interactant intactId="EBI-12809220">
        <id>Q5SWW7</id>
        <label>C10orf55</label>
    </interactant>
    <organismsDiffer>false</organismsDiffer>
    <experiments>3</experiments>
</comment>
<comment type="interaction">
    <interactant intactId="EBI-2798841">
        <id>P35680</id>
    </interactant>
    <interactant intactId="EBI-748171">
        <id>O43186</id>
        <label>CRX</label>
    </interactant>
    <organismsDiffer>false</organismsDiffer>
    <experiments>3</experiments>
</comment>
<comment type="interaction">
    <interactant intactId="EBI-2798841">
        <id>P35680</id>
    </interactant>
    <interactant intactId="EBI-636034">
        <id>P20823</id>
        <label>HNF1A</label>
    </interactant>
    <organismsDiffer>false</organismsDiffer>
    <experiments>2</experiments>
</comment>
<comment type="interaction">
    <interactant intactId="EBI-2798841">
        <id>P35680</id>
    </interactant>
    <interactant intactId="EBI-3957672">
        <id>Q6PEX3</id>
        <label>KRTAP26-1</label>
    </interactant>
    <organismsDiffer>false</organismsDiffer>
    <experiments>3</experiments>
</comment>
<comment type="interaction">
    <interactant intactId="EBI-2798841">
        <id>P35680</id>
    </interactant>
    <interactant intactId="EBI-12853322">
        <id>P55197-2</id>
        <label>MLLT10</label>
    </interactant>
    <organismsDiffer>false</organismsDiffer>
    <experiments>3</experiments>
</comment>
<comment type="interaction">
    <interactant intactId="EBI-2798841">
        <id>P35680</id>
    </interactant>
    <interactant intactId="EBI-9087860">
        <id>P32243-2</id>
        <label>OTX2</label>
    </interactant>
    <organismsDiffer>false</organismsDiffer>
    <experiments>3</experiments>
</comment>
<comment type="interaction">
    <interactant intactId="EBI-2798841">
        <id>P35680</id>
    </interactant>
    <interactant intactId="EBI-12813389">
        <id>Q8TDS5</id>
        <label>OXER1</label>
    </interactant>
    <organismsDiffer>false</organismsDiffer>
    <experiments>3</experiments>
</comment>
<comment type="interaction">
    <interactant intactId="EBI-2798841">
        <id>P35680</id>
    </interactant>
    <interactant intactId="EBI-740475">
        <id>P61457</id>
        <label>PCBD1</label>
    </interactant>
    <organismsDiffer>false</organismsDiffer>
    <experiments>8</experiments>
</comment>
<comment type="interaction">
    <interactant intactId="EBI-2798841">
        <id>P35680</id>
    </interactant>
    <interactant intactId="EBI-12029004">
        <id>P78424</id>
        <label>POU6F2</label>
    </interactant>
    <organismsDiffer>false</organismsDiffer>
    <experiments>3</experiments>
</comment>
<comment type="interaction">
    <interactant intactId="EBI-2798841">
        <id>P35680</id>
    </interactant>
    <interactant intactId="EBI-12068150">
        <id>Q6NVU6</id>
        <label>UFSP1</label>
    </interactant>
    <organismsDiffer>false</organismsDiffer>
    <experiments>3</experiments>
</comment>
<comment type="interaction">
    <interactant intactId="EBI-2798841">
        <id>P35680</id>
    </interactant>
    <interactant intactId="EBI-11975223">
        <id>Q70EL1-9</id>
        <label>USP54</label>
    </interactant>
    <organismsDiffer>false</organismsDiffer>
    <experiments>3</experiments>
</comment>
<comment type="interaction">
    <interactant intactId="EBI-2798841">
        <id>P35680</id>
    </interactant>
    <interactant intactId="EBI-2107455">
        <id>Q08AM6</id>
        <label>VAC14</label>
    </interactant>
    <organismsDiffer>false</organismsDiffer>
    <experiments>3</experiments>
</comment>
<comment type="subcellular location">
    <subcellularLocation>
        <location>Nucleus</location>
    </subcellularLocation>
</comment>
<comment type="alternative products">
    <event type="alternative splicing"/>
    <isoform>
        <id>P35680-1</id>
        <name>A</name>
        <sequence type="displayed"/>
    </isoform>
    <isoform>
        <id>P35680-2</id>
        <name>B</name>
        <sequence type="described" ref="VSP_002254"/>
    </isoform>
    <isoform>
        <id>P35680-3</id>
        <name>C</name>
        <sequence type="described" ref="VSP_002255 VSP_002256"/>
    </isoform>
    <isoform>
        <id>P35680-4</id>
        <name>4</name>
        <sequence type="described" ref="VSP_053327 VSP_002254 VSP_053328 VSP_053329"/>
    </isoform>
</comment>
<comment type="disease" evidence="8 9 10 11 13 14 15 16 17 18 21">
    <disease id="DI-00967">
        <name>Renal cysts and diabetes syndrome</name>
        <acronym>RCAD</acronym>
        <description>An autosomal dominant disorder comprising non-diabetic renal disease resulting from abnormal renal development, and diabetes, which in some cases occurs earlier than age 25 years and is thus consistent with a diagnosis of maturity-onset diabetes of the young (MODY5). The renal disease is highly variable and includes renal cysts, glomerular tufts, aberrant nephrogenesis, primitive tubules, irregular collecting systems, oligomeganephronia, enlarged renal pelves, abnormal calyces, small kidney, single kidney, horseshoe kidney, and hyperuricemic nephropathy. Affected individuals may also have abnormalities of the genital tract.</description>
        <dbReference type="MIM" id="137920"/>
    </disease>
    <text>The disease is caused by variants affecting the gene represented in this entry.</text>
</comment>
<comment type="disease" evidence="12">
    <disease id="DI-02060">
        <name>Type 2 diabetes mellitus</name>
        <acronym>T2D</acronym>
        <description>A multifactorial disorder of glucose homeostasis caused by a lack of sensitivity to insulin. Affected individuals usually have an obese body habitus and manifestations of a metabolic syndrome characterized by diabetes, insulin resistance, hypertension and hypertriglyceridemia. The disease results in long-term complications that affect the eyes, kidneys, nerves, and blood vessels.</description>
        <dbReference type="MIM" id="125853"/>
    </disease>
    <text>Disease susceptibility may be associated with variants affecting the gene represented in this entry.</text>
</comment>
<comment type="disease" evidence="20">
    <disease id="DI-02662">
        <name>Prostate cancer, hereditary, 11</name>
        <acronym>HPC11</acronym>
        <description>A condition associated with familial predisposition to cancer of the prostate. Most prostate cancers are adenocarcinomas that develop in the acini of the prostatic ducts. Other rare histopathologic types of prostate cancer that occur in approximately 5% of patients include small cell carcinoma, mucinous carcinoma, prostatic ductal carcinoma, transitional cell carcinoma, squamous cell carcinoma, basal cell carcinoma, adenoid cystic carcinoma (basaloid), signet-ring cell carcinoma and neuroendocrine carcinoma.</description>
        <dbReference type="MIM" id="611955"/>
    </disease>
    <text>Disease susceptibility is associated with variants affecting the gene represented in this entry.</text>
</comment>
<comment type="similarity">
    <text evidence="26">Belongs to the HNF1 homeobox family.</text>
</comment>
<comment type="online information" name="Wikipedia">
    <link uri="https://en.wikipedia.org/wiki/Hepatocyte_nuclear_factors"/>
    <text>Hepatocyte nuclear factors entry</text>
</comment>
<sequence length="557" mass="61324">MVSKLTSLQQELLSALLSSGVTKEVLVQALEELLPSPNFGVKLETLPLSPGSGAEPDTKPVFHTLTNGHAKGRLSGDEGSEDGDDYDTPPILKELQALNTEEAAEQRAEVDRMLSEDPWRAAKMIKGYMQQHNIPQREVVDVTGLNQSHLSQHLNKGTPMKTQKRAALYTWYVRKQREILRQFNQTVQSSGNMTDKSSQDQLLFLFPEFSQQSHGPGQSDDACSEPTNKKMRRNRFKWGPASQQILYQAYDRQKNPSKEEREALVEECNRAECLQRGVSPSKAHGLGSNLVTEVRVYNWFANRRKEEAFRQKLAMDAYSSNQTHSLNPLLSHGSPHHQPSSSPPNKLSGVRYSQQGNNEITSSSTISHHGNSAMVTSQSVLQQVSPASLDPGHNLLSPDGKMISVSGGGLPPVSTLTNIHSLSHHNPQQSQNLIMTPLSGVMAIAQSLNTSQAQSVPVINSVAGSLAALQPVQFSQQLHSPHQQPLMQQSPGSHMAQQPFMAAVTQLQNSHMYAHKQEPPQYSHTSRFPSAMVVTDTSSISTLTNMSSSKQCPLQAW</sequence>
<name>HNF1B_HUMAN</name>
<dbReference type="EMBL" id="X58840">
    <property type="protein sequence ID" value="CAA41652.1"/>
    <property type="molecule type" value="mRNA"/>
</dbReference>
<dbReference type="EMBL" id="X71348">
    <property type="protein sequence ID" value="CAB59223.1"/>
    <property type="molecule type" value="mRNA"/>
</dbReference>
<dbReference type="EMBL" id="U90287">
    <property type="protein sequence ID" value="AAC63388.1"/>
    <property type="molecule type" value="Genomic_DNA"/>
</dbReference>
<dbReference type="EMBL" id="U90279">
    <property type="protein sequence ID" value="AAC63388.1"/>
    <property type="status" value="JOINED"/>
    <property type="molecule type" value="Genomic_DNA"/>
</dbReference>
<dbReference type="EMBL" id="U90280">
    <property type="protein sequence ID" value="AAC63388.1"/>
    <property type="status" value="JOINED"/>
    <property type="molecule type" value="Genomic_DNA"/>
</dbReference>
<dbReference type="EMBL" id="U90281">
    <property type="protein sequence ID" value="AAC63388.1"/>
    <property type="status" value="JOINED"/>
    <property type="molecule type" value="Genomic_DNA"/>
</dbReference>
<dbReference type="EMBL" id="U90282">
    <property type="protein sequence ID" value="AAC63388.1"/>
    <property type="status" value="JOINED"/>
    <property type="molecule type" value="Genomic_DNA"/>
</dbReference>
<dbReference type="EMBL" id="U90283">
    <property type="protein sequence ID" value="AAC63388.1"/>
    <property type="status" value="JOINED"/>
    <property type="molecule type" value="Genomic_DNA"/>
</dbReference>
<dbReference type="EMBL" id="U90284">
    <property type="protein sequence ID" value="AAC63388.1"/>
    <property type="status" value="JOINED"/>
    <property type="molecule type" value="Genomic_DNA"/>
</dbReference>
<dbReference type="EMBL" id="U90285">
    <property type="protein sequence ID" value="AAC63388.1"/>
    <property type="status" value="JOINED"/>
    <property type="molecule type" value="Genomic_DNA"/>
</dbReference>
<dbReference type="EMBL" id="U90286">
    <property type="protein sequence ID" value="AAC63388.1"/>
    <property type="status" value="JOINED"/>
    <property type="molecule type" value="Genomic_DNA"/>
</dbReference>
<dbReference type="EMBL" id="HM116556">
    <property type="protein sequence ID" value="ADM43493.1"/>
    <property type="molecule type" value="mRNA"/>
</dbReference>
<dbReference type="EMBL" id="AK296633">
    <property type="protein sequence ID" value="BAG59235.1"/>
    <property type="molecule type" value="mRNA"/>
</dbReference>
<dbReference type="EMBL" id="AC091199">
    <property type="status" value="NOT_ANNOTATED_CDS"/>
    <property type="molecule type" value="Genomic_DNA"/>
</dbReference>
<dbReference type="EMBL" id="AC113211">
    <property type="status" value="NOT_ANNOTATED_CDS"/>
    <property type="molecule type" value="Genomic_DNA"/>
</dbReference>
<dbReference type="EMBL" id="BC017714">
    <property type="protein sequence ID" value="AAH17714.1"/>
    <property type="molecule type" value="mRNA"/>
</dbReference>
<dbReference type="CCDS" id="CCDS11324.1">
    <molecule id="P35680-1"/>
</dbReference>
<dbReference type="CCDS" id="CCDS58538.1">
    <molecule id="P35680-2"/>
</dbReference>
<dbReference type="PIR" id="S34412">
    <property type="entry name" value="S34412"/>
</dbReference>
<dbReference type="RefSeq" id="NP_000449.1">
    <molecule id="P35680-1"/>
    <property type="nucleotide sequence ID" value="NM_000458.4"/>
</dbReference>
<dbReference type="RefSeq" id="NP_001159395.1">
    <molecule id="P35680-2"/>
    <property type="nucleotide sequence ID" value="NM_001165923.4"/>
</dbReference>
<dbReference type="RefSeq" id="NP_001291215.1">
    <property type="nucleotide sequence ID" value="NM_001304286.1"/>
</dbReference>
<dbReference type="PDB" id="2DA6">
    <property type="method" value="NMR"/>
    <property type="chains" value="A=233-321"/>
</dbReference>
<dbReference type="PDB" id="2H8R">
    <property type="method" value="X-ray"/>
    <property type="resolution" value="3.20 A"/>
    <property type="chains" value="A/B=91-310"/>
</dbReference>
<dbReference type="PDB" id="5K9S">
    <property type="method" value="X-ray"/>
    <property type="resolution" value="2.40 A"/>
    <property type="chains" value="B/C=227-237"/>
</dbReference>
<dbReference type="PDBsum" id="2DA6"/>
<dbReference type="PDBsum" id="2H8R"/>
<dbReference type="PDBsum" id="5K9S"/>
<dbReference type="BMRB" id="P35680"/>
<dbReference type="SMR" id="P35680"/>
<dbReference type="BioGRID" id="112790">
    <property type="interactions" value="195"/>
</dbReference>
<dbReference type="FunCoup" id="P35680">
    <property type="interactions" value="1333"/>
</dbReference>
<dbReference type="IntAct" id="P35680">
    <property type="interactions" value="140"/>
</dbReference>
<dbReference type="STRING" id="9606.ENSP00000480291"/>
<dbReference type="iPTMnet" id="P35680"/>
<dbReference type="PhosphoSitePlus" id="P35680"/>
<dbReference type="BioMuta" id="HNF1B"/>
<dbReference type="DMDM" id="547664"/>
<dbReference type="jPOST" id="P35680"/>
<dbReference type="MassIVE" id="P35680"/>
<dbReference type="PaxDb" id="9606-ENSP00000480291"/>
<dbReference type="PeptideAtlas" id="P35680"/>
<dbReference type="ProteomicsDB" id="15199"/>
<dbReference type="ProteomicsDB" id="55134">
    <molecule id="P35680-1"/>
</dbReference>
<dbReference type="ProteomicsDB" id="55135">
    <molecule id="P35680-2"/>
</dbReference>
<dbReference type="ProteomicsDB" id="55136">
    <molecule id="P35680-3"/>
</dbReference>
<dbReference type="Antibodypedia" id="72795">
    <property type="antibodies" value="546 antibodies from 38 providers"/>
</dbReference>
<dbReference type="DNASU" id="6928"/>
<dbReference type="Ensembl" id="ENST00000610754.4">
    <molecule id="P35680-1"/>
    <property type="protein sequence ID" value="ENSP00000484591.1"/>
    <property type="gene ID" value="ENSG00000276194.4"/>
</dbReference>
<dbReference type="Ensembl" id="ENST00000617811.5">
    <molecule id="P35680-1"/>
    <property type="protein sequence ID" value="ENSP00000480291.1"/>
    <property type="gene ID" value="ENSG00000275410.6"/>
</dbReference>
<dbReference type="Ensembl" id="ENST00000621123.4">
    <molecule id="P35680-2"/>
    <property type="protein sequence ID" value="ENSP00000482711.1"/>
    <property type="gene ID" value="ENSG00000275410.6"/>
</dbReference>
<dbReference type="Ensembl" id="ENST00000633792.1">
    <molecule id="P35680-2"/>
    <property type="protein sequence ID" value="ENSP00000488080.1"/>
    <property type="gene ID" value="ENSG00000276194.4"/>
</dbReference>
<dbReference type="GeneID" id="6928"/>
<dbReference type="KEGG" id="hsa:6928"/>
<dbReference type="MANE-Select" id="ENST00000617811.5">
    <property type="protein sequence ID" value="ENSP00000480291.1"/>
    <property type="RefSeq nucleotide sequence ID" value="NM_000458.4"/>
    <property type="RefSeq protein sequence ID" value="NP_000449.1"/>
</dbReference>
<dbReference type="UCSC" id="uc010wdi.3">
    <molecule id="P35680-1"/>
    <property type="organism name" value="human"/>
</dbReference>
<dbReference type="AGR" id="HGNC:11630"/>
<dbReference type="CTD" id="6928"/>
<dbReference type="DisGeNET" id="6928"/>
<dbReference type="GeneCards" id="HNF1B"/>
<dbReference type="GeneReviews" id="HNF1B"/>
<dbReference type="HGNC" id="HGNC:11630">
    <property type="gene designation" value="HNF1B"/>
</dbReference>
<dbReference type="HPA" id="ENSG00000275410">
    <property type="expression patterns" value="Tissue enhanced (kidney, pancreas)"/>
</dbReference>
<dbReference type="MalaCards" id="HNF1B"/>
<dbReference type="MIM" id="125853">
    <property type="type" value="phenotype"/>
</dbReference>
<dbReference type="MIM" id="137920">
    <property type="type" value="phenotype"/>
</dbReference>
<dbReference type="MIM" id="189907">
    <property type="type" value="gene"/>
</dbReference>
<dbReference type="MIM" id="611955">
    <property type="type" value="phenotype"/>
</dbReference>
<dbReference type="neXtProt" id="NX_P35680"/>
<dbReference type="OpenTargets" id="ENSG00000275410"/>
<dbReference type="Orphanet" id="261265">
    <property type="disease" value="17q12 microdeletion syndrome"/>
</dbReference>
<dbReference type="Orphanet" id="97364">
    <property type="disease" value="Bilateral multicystic dysplastic kidney"/>
</dbReference>
<dbReference type="Orphanet" id="1331">
    <property type="disease" value="Familial prostate cancer"/>
</dbReference>
<dbReference type="Orphanet" id="93111">
    <property type="disease" value="HNF1B-related autosomal dominant tubulointerstitial kidney disease"/>
</dbReference>
<dbReference type="Orphanet" id="2578">
    <property type="disease" value="Mayer-Rokitansky-Kuester-Hauser syndrome type 2"/>
</dbReference>
<dbReference type="Orphanet" id="1309">
    <property type="disease" value="Medullary sponge kidney"/>
</dbReference>
<dbReference type="Orphanet" id="93173">
    <property type="disease" value="Renal dysplasia, bilateral"/>
</dbReference>
<dbReference type="Orphanet" id="93172">
    <property type="disease" value="Renal dysplasia, unilateral"/>
</dbReference>
<dbReference type="Orphanet" id="97363">
    <property type="disease" value="Unilateral multicystic dysplastic kidney"/>
</dbReference>
<dbReference type="PharmGKB" id="PA162391083"/>
<dbReference type="VEuPathDB" id="HostDB:ENSG00000275410"/>
<dbReference type="eggNOG" id="ENOG502QRPW">
    <property type="taxonomic scope" value="Eukaryota"/>
</dbReference>
<dbReference type="GeneTree" id="ENSGT00940000153818"/>
<dbReference type="HOGENOM" id="CLU_035503_0_0_1"/>
<dbReference type="InParanoid" id="P35680"/>
<dbReference type="OMA" id="GQSDDTC"/>
<dbReference type="OrthoDB" id="10069265at2759"/>
<dbReference type="PAN-GO" id="P35680">
    <property type="GO annotations" value="4 GO annotations based on evolutionary models"/>
</dbReference>
<dbReference type="PhylomeDB" id="P35680"/>
<dbReference type="TreeFam" id="TF320327"/>
<dbReference type="PathwayCommons" id="P35680"/>
<dbReference type="Reactome" id="R-HSA-210744">
    <property type="pathway name" value="Regulation of gene expression in late stage (branching morphogenesis) pancreatic bud precursor cells"/>
</dbReference>
<dbReference type="Reactome" id="R-HSA-210747">
    <property type="pathway name" value="Regulation of gene expression in early pancreatic precursor cells"/>
</dbReference>
<dbReference type="Reactome" id="R-HSA-9831926">
    <property type="pathway name" value="Nephron development"/>
</dbReference>
<dbReference type="Reactome" id="R-HSA-9925561">
    <property type="pathway name" value="Developmental Lineage of Pancreatic Acinar Cells"/>
</dbReference>
<dbReference type="SignaLink" id="P35680"/>
<dbReference type="SIGNOR" id="P35680"/>
<dbReference type="BioGRID-ORCS" id="6928">
    <property type="hits" value="78 hits in 1179 CRISPR screens"/>
</dbReference>
<dbReference type="ChiTaRS" id="HNF1B">
    <property type="organism name" value="human"/>
</dbReference>
<dbReference type="EvolutionaryTrace" id="P35680"/>
<dbReference type="GeneWiki" id="HNF1B"/>
<dbReference type="GenomeRNAi" id="6928"/>
<dbReference type="Pharos" id="P35680">
    <property type="development level" value="Tbio"/>
</dbReference>
<dbReference type="PRO" id="PR:P35680"/>
<dbReference type="Proteomes" id="UP000005640">
    <property type="component" value="Chromosome 17"/>
</dbReference>
<dbReference type="RNAct" id="P35680">
    <property type="molecule type" value="protein"/>
</dbReference>
<dbReference type="Bgee" id="ENSG00000275410">
    <property type="expression patterns" value="Expressed in metanephros cortex and 54 other cell types or tissues"/>
</dbReference>
<dbReference type="ExpressionAtlas" id="P35680">
    <property type="expression patterns" value="baseline and differential"/>
</dbReference>
<dbReference type="GO" id="GO:0000785">
    <property type="term" value="C:chromatin"/>
    <property type="evidence" value="ECO:0000247"/>
    <property type="project" value="NTNU_SB"/>
</dbReference>
<dbReference type="GO" id="GO:0005829">
    <property type="term" value="C:cytosol"/>
    <property type="evidence" value="ECO:0000314"/>
    <property type="project" value="HPA"/>
</dbReference>
<dbReference type="GO" id="GO:0043231">
    <property type="term" value="C:intracellular membrane-bounded organelle"/>
    <property type="evidence" value="ECO:0000314"/>
    <property type="project" value="HPA"/>
</dbReference>
<dbReference type="GO" id="GO:0005654">
    <property type="term" value="C:nucleoplasm"/>
    <property type="evidence" value="ECO:0000314"/>
    <property type="project" value="HPA"/>
</dbReference>
<dbReference type="GO" id="GO:0005634">
    <property type="term" value="C:nucleus"/>
    <property type="evidence" value="ECO:0000314"/>
    <property type="project" value="UniProtKB"/>
</dbReference>
<dbReference type="GO" id="GO:0005667">
    <property type="term" value="C:transcription regulator complex"/>
    <property type="evidence" value="ECO:0007669"/>
    <property type="project" value="Ensembl"/>
</dbReference>
<dbReference type="GO" id="GO:0003677">
    <property type="term" value="F:DNA binding"/>
    <property type="evidence" value="ECO:0000314"/>
    <property type="project" value="UniProtKB"/>
</dbReference>
<dbReference type="GO" id="GO:0003700">
    <property type="term" value="F:DNA-binding transcription factor activity"/>
    <property type="evidence" value="ECO:0000314"/>
    <property type="project" value="UniProtKB"/>
</dbReference>
<dbReference type="GO" id="GO:0000981">
    <property type="term" value="F:DNA-binding transcription factor activity, RNA polymerase II-specific"/>
    <property type="evidence" value="ECO:0000247"/>
    <property type="project" value="NTNU_SB"/>
</dbReference>
<dbReference type="GO" id="GO:0042802">
    <property type="term" value="F:identical protein binding"/>
    <property type="evidence" value="ECO:0007669"/>
    <property type="project" value="Ensembl"/>
</dbReference>
<dbReference type="GO" id="GO:1990841">
    <property type="term" value="F:promoter-specific chromatin binding"/>
    <property type="evidence" value="ECO:0007669"/>
    <property type="project" value="Ensembl"/>
</dbReference>
<dbReference type="GO" id="GO:0042803">
    <property type="term" value="F:protein homodimerization activity"/>
    <property type="evidence" value="ECO:0000353"/>
    <property type="project" value="UniProtKB"/>
</dbReference>
<dbReference type="GO" id="GO:0000978">
    <property type="term" value="F:RNA polymerase II cis-regulatory region sequence-specific DNA binding"/>
    <property type="evidence" value="ECO:0000318"/>
    <property type="project" value="GO_Central"/>
</dbReference>
<dbReference type="GO" id="GO:0001221">
    <property type="term" value="F:transcription coregulator binding"/>
    <property type="evidence" value="ECO:0000353"/>
    <property type="project" value="UniProtKB"/>
</dbReference>
<dbReference type="GO" id="GO:0009952">
    <property type="term" value="P:anterior/posterior pattern specification"/>
    <property type="evidence" value="ECO:0007669"/>
    <property type="project" value="Ensembl"/>
</dbReference>
<dbReference type="GO" id="GO:0048754">
    <property type="term" value="P:branching morphogenesis of an epithelial tube"/>
    <property type="evidence" value="ECO:0007669"/>
    <property type="project" value="Ensembl"/>
</dbReference>
<dbReference type="GO" id="GO:0048557">
    <property type="term" value="P:embryonic digestive tract morphogenesis"/>
    <property type="evidence" value="ECO:0007669"/>
    <property type="project" value="Ensembl"/>
</dbReference>
<dbReference type="GO" id="GO:0031018">
    <property type="term" value="P:endocrine pancreas development"/>
    <property type="evidence" value="ECO:0000315"/>
    <property type="project" value="UniProtKB"/>
</dbReference>
<dbReference type="GO" id="GO:0001714">
    <property type="term" value="P:endodermal cell fate specification"/>
    <property type="evidence" value="ECO:0007669"/>
    <property type="project" value="Ensembl"/>
</dbReference>
<dbReference type="GO" id="GO:0050673">
    <property type="term" value="P:epithelial cell proliferation"/>
    <property type="evidence" value="ECO:0007669"/>
    <property type="project" value="Ensembl"/>
</dbReference>
<dbReference type="GO" id="GO:0010467">
    <property type="term" value="P:gene expression"/>
    <property type="evidence" value="ECO:0007669"/>
    <property type="project" value="Ensembl"/>
</dbReference>
<dbReference type="GO" id="GO:0048806">
    <property type="term" value="P:genitalia development"/>
    <property type="evidence" value="ECO:0000315"/>
    <property type="project" value="UniProtKB"/>
</dbReference>
<dbReference type="GO" id="GO:0061017">
    <property type="term" value="P:hepatoblast differentiation"/>
    <property type="evidence" value="ECO:0007669"/>
    <property type="project" value="Ensembl"/>
</dbReference>
<dbReference type="GO" id="GO:0030902">
    <property type="term" value="P:hindbrain development"/>
    <property type="evidence" value="ECO:0007669"/>
    <property type="project" value="Ensembl"/>
</dbReference>
<dbReference type="GO" id="GO:0001826">
    <property type="term" value="P:inner cell mass cell differentiation"/>
    <property type="evidence" value="ECO:0007669"/>
    <property type="project" value="Ensembl"/>
</dbReference>
<dbReference type="GO" id="GO:0030073">
    <property type="term" value="P:insulin secretion"/>
    <property type="evidence" value="ECO:0007669"/>
    <property type="project" value="Ensembl"/>
</dbReference>
<dbReference type="GO" id="GO:0001822">
    <property type="term" value="P:kidney development"/>
    <property type="evidence" value="ECO:0000314"/>
    <property type="project" value="UniProtKB"/>
</dbReference>
<dbReference type="GO" id="GO:1900200">
    <property type="term" value="P:mesenchymal cell apoptotic process involved in metanephros development"/>
    <property type="evidence" value="ECO:0007669"/>
    <property type="project" value="Ensembl"/>
</dbReference>
<dbReference type="GO" id="GO:0072181">
    <property type="term" value="P:mesonephric duct formation"/>
    <property type="evidence" value="ECO:0007669"/>
    <property type="project" value="Ensembl"/>
</dbReference>
<dbReference type="GO" id="GO:0061296">
    <property type="term" value="P:negative regulation of mesenchymal cell apoptotic process involved in mesonephric nephron morphogenesis"/>
    <property type="evidence" value="ECO:0007669"/>
    <property type="project" value="Ensembl"/>
</dbReference>
<dbReference type="GO" id="GO:1900212">
    <property type="term" value="P:negative regulation of mesenchymal cell apoptotic process involved in metanephros development"/>
    <property type="evidence" value="ECO:0007669"/>
    <property type="project" value="Ensembl"/>
</dbReference>
<dbReference type="GO" id="GO:0000122">
    <property type="term" value="P:negative regulation of transcription by RNA polymerase II"/>
    <property type="evidence" value="ECO:0007669"/>
    <property type="project" value="Ensembl"/>
</dbReference>
<dbReference type="GO" id="GO:0007219">
    <property type="term" value="P:Notch signaling pathway"/>
    <property type="evidence" value="ECO:0007669"/>
    <property type="project" value="Ensembl"/>
</dbReference>
<dbReference type="GO" id="GO:0031016">
    <property type="term" value="P:pancreas development"/>
    <property type="evidence" value="ECO:0007669"/>
    <property type="project" value="InterPro"/>
</dbReference>
<dbReference type="GO" id="GO:0045893">
    <property type="term" value="P:positive regulation of DNA-templated transcription"/>
    <property type="evidence" value="ECO:0000314"/>
    <property type="project" value="UniProtKB"/>
</dbReference>
<dbReference type="GO" id="GO:0010628">
    <property type="term" value="P:positive regulation of gene expression"/>
    <property type="evidence" value="ECO:0007669"/>
    <property type="project" value="Ensembl"/>
</dbReference>
<dbReference type="GO" id="GO:0060261">
    <property type="term" value="P:positive regulation of transcription initiation by RNA polymerase II"/>
    <property type="evidence" value="ECO:0000314"/>
    <property type="project" value="UniProtKB"/>
</dbReference>
<dbReference type="GO" id="GO:0039020">
    <property type="term" value="P:pronephric nephron tubule development"/>
    <property type="evidence" value="ECO:0000316"/>
    <property type="project" value="UniProtKB"/>
</dbReference>
<dbReference type="GO" id="GO:0048793">
    <property type="term" value="P:pronephros development"/>
    <property type="evidence" value="ECO:0000315"/>
    <property type="project" value="UniProtKB"/>
</dbReference>
<dbReference type="GO" id="GO:0072095">
    <property type="term" value="P:regulation of branch elongation involved in ureteric bud branching"/>
    <property type="evidence" value="ECO:0007669"/>
    <property type="project" value="Ensembl"/>
</dbReference>
<dbReference type="GO" id="GO:0035565">
    <property type="term" value="P:regulation of pronephros size"/>
    <property type="evidence" value="ECO:0000315"/>
    <property type="project" value="UniProtKB"/>
</dbReference>
<dbReference type="GO" id="GO:0006357">
    <property type="term" value="P:regulation of transcription by RNA polymerase II"/>
    <property type="evidence" value="ECO:0000318"/>
    <property type="project" value="GO_Central"/>
</dbReference>
<dbReference type="GO" id="GO:0030111">
    <property type="term" value="P:regulation of Wnt signaling pathway"/>
    <property type="evidence" value="ECO:0007669"/>
    <property type="project" value="Ensembl"/>
</dbReference>
<dbReference type="GO" id="GO:0009749">
    <property type="term" value="P:response to glucose"/>
    <property type="evidence" value="ECO:0007669"/>
    <property type="project" value="Ensembl"/>
</dbReference>
<dbReference type="GO" id="GO:0060677">
    <property type="term" value="P:ureteric bud elongation"/>
    <property type="evidence" value="ECO:0007669"/>
    <property type="project" value="Ensembl"/>
</dbReference>
<dbReference type="CDD" id="cd00086">
    <property type="entry name" value="homeodomain"/>
    <property type="match status" value="1"/>
</dbReference>
<dbReference type="FunFam" id="1.10.10.60:FF:000043">
    <property type="entry name" value="Hepatocyte nuclear factor 1-beta"/>
    <property type="match status" value="1"/>
</dbReference>
<dbReference type="FunFam" id="1.10.260.40:FF:000009">
    <property type="entry name" value="Hepatocyte nuclear factor 1-beta"/>
    <property type="match status" value="1"/>
</dbReference>
<dbReference type="Gene3D" id="1.10.10.60">
    <property type="entry name" value="Homeodomain-like"/>
    <property type="match status" value="1"/>
</dbReference>
<dbReference type="Gene3D" id="1.10.260.40">
    <property type="entry name" value="lambda repressor-like DNA-binding domains"/>
    <property type="match status" value="1"/>
</dbReference>
<dbReference type="InterPro" id="IPR001356">
    <property type="entry name" value="HD"/>
</dbReference>
<dbReference type="InterPro" id="IPR039066">
    <property type="entry name" value="HNF-1"/>
</dbReference>
<dbReference type="InterPro" id="IPR006899">
    <property type="entry name" value="HNF-1_N"/>
</dbReference>
<dbReference type="InterPro" id="IPR044869">
    <property type="entry name" value="HNF-1_POU"/>
</dbReference>
<dbReference type="InterPro" id="IPR023219">
    <property type="entry name" value="HNF1_dimer_N_dom_sf"/>
</dbReference>
<dbReference type="InterPro" id="IPR006897">
    <property type="entry name" value="HNF1b_C"/>
</dbReference>
<dbReference type="InterPro" id="IPR044866">
    <property type="entry name" value="HNF_P1"/>
</dbReference>
<dbReference type="InterPro" id="IPR009057">
    <property type="entry name" value="Homeodomain-like_sf"/>
</dbReference>
<dbReference type="InterPro" id="IPR010982">
    <property type="entry name" value="Lambda_DNA-bd_dom_sf"/>
</dbReference>
<dbReference type="PANTHER" id="PTHR11568">
    <property type="entry name" value="HEPATOCYTE NUCLEAR FACTOR 1"/>
    <property type="match status" value="1"/>
</dbReference>
<dbReference type="PANTHER" id="PTHR11568:SF2">
    <property type="entry name" value="HEPATOCYTE NUCLEAR FACTOR 1-BETA"/>
    <property type="match status" value="1"/>
</dbReference>
<dbReference type="Pfam" id="PF04814">
    <property type="entry name" value="HNF-1_N"/>
    <property type="match status" value="1"/>
</dbReference>
<dbReference type="Pfam" id="PF04812">
    <property type="entry name" value="HNF-1B_C"/>
    <property type="match status" value="1"/>
</dbReference>
<dbReference type="SMART" id="SM00389">
    <property type="entry name" value="HOX"/>
    <property type="match status" value="1"/>
</dbReference>
<dbReference type="SUPFAM" id="SSF100957">
    <property type="entry name" value="Dimerization cofactor of HNF-1 alpha"/>
    <property type="match status" value="1"/>
</dbReference>
<dbReference type="SUPFAM" id="SSF46689">
    <property type="entry name" value="Homeodomain-like"/>
    <property type="match status" value="1"/>
</dbReference>
<dbReference type="SUPFAM" id="SSF47413">
    <property type="entry name" value="lambda repressor-like DNA-binding domains"/>
    <property type="match status" value="1"/>
</dbReference>
<dbReference type="PROSITE" id="PS51937">
    <property type="entry name" value="HNF_P1"/>
    <property type="match status" value="1"/>
</dbReference>
<dbReference type="PROSITE" id="PS00027">
    <property type="entry name" value="HOMEOBOX_1"/>
    <property type="match status" value="1"/>
</dbReference>
<dbReference type="PROSITE" id="PS50071">
    <property type="entry name" value="HOMEOBOX_2"/>
    <property type="match status" value="1"/>
</dbReference>
<dbReference type="PROSITE" id="PS51936">
    <property type="entry name" value="POU_4"/>
    <property type="match status" value="1"/>
</dbReference>